<comment type="function">
    <text evidence="1">Specifically methylates the ribose of guanosine 2251 in 23S rRNA.</text>
</comment>
<comment type="catalytic activity">
    <reaction evidence="1">
        <text>guanosine(2251) in 23S rRNA + S-adenosyl-L-methionine = 2'-O-methylguanosine(2251) in 23S rRNA + S-adenosyl-L-homocysteine + H(+)</text>
        <dbReference type="Rhea" id="RHEA:24140"/>
        <dbReference type="Rhea" id="RHEA-COMP:10239"/>
        <dbReference type="Rhea" id="RHEA-COMP:10241"/>
        <dbReference type="ChEBI" id="CHEBI:15378"/>
        <dbReference type="ChEBI" id="CHEBI:57856"/>
        <dbReference type="ChEBI" id="CHEBI:59789"/>
        <dbReference type="ChEBI" id="CHEBI:74269"/>
        <dbReference type="ChEBI" id="CHEBI:74445"/>
        <dbReference type="EC" id="2.1.1.185"/>
    </reaction>
</comment>
<comment type="subunit">
    <text evidence="1">Homodimer.</text>
</comment>
<comment type="subcellular location">
    <subcellularLocation>
        <location evidence="1">Cytoplasm</location>
    </subcellularLocation>
</comment>
<comment type="similarity">
    <text evidence="1">Belongs to the class IV-like SAM-binding methyltransferase superfamily. RNA methyltransferase TrmH family. RlmB subfamily.</text>
</comment>
<dbReference type="EC" id="2.1.1.185" evidence="1"/>
<dbReference type="EMBL" id="AE005674">
    <property type="protein sequence ID" value="AAN45752.1"/>
    <property type="molecule type" value="Genomic_DNA"/>
</dbReference>
<dbReference type="EMBL" id="AE014073">
    <property type="protein sequence ID" value="AAP19535.1"/>
    <property type="molecule type" value="Genomic_DNA"/>
</dbReference>
<dbReference type="RefSeq" id="WP_001293282.1">
    <property type="nucleotide sequence ID" value="NZ_WPGW01000048.1"/>
</dbReference>
<dbReference type="SMR" id="P63180"/>
<dbReference type="STRING" id="198214.SF4335"/>
<dbReference type="PaxDb" id="198214-SF4335"/>
<dbReference type="GeneID" id="93777641"/>
<dbReference type="KEGG" id="sfl:SF4335"/>
<dbReference type="KEGG" id="sfx:S4603"/>
<dbReference type="PATRIC" id="fig|198214.7.peg.5110"/>
<dbReference type="HOGENOM" id="CLU_021322_0_1_6"/>
<dbReference type="Proteomes" id="UP000001006">
    <property type="component" value="Chromosome"/>
</dbReference>
<dbReference type="Proteomes" id="UP000002673">
    <property type="component" value="Chromosome"/>
</dbReference>
<dbReference type="GO" id="GO:0005829">
    <property type="term" value="C:cytosol"/>
    <property type="evidence" value="ECO:0007669"/>
    <property type="project" value="TreeGrafter"/>
</dbReference>
<dbReference type="GO" id="GO:0003723">
    <property type="term" value="F:RNA binding"/>
    <property type="evidence" value="ECO:0007669"/>
    <property type="project" value="InterPro"/>
</dbReference>
<dbReference type="GO" id="GO:0070039">
    <property type="term" value="F:rRNA (guanosine-2'-O-)-methyltransferase activity"/>
    <property type="evidence" value="ECO:0007669"/>
    <property type="project" value="UniProtKB-UniRule"/>
</dbReference>
<dbReference type="CDD" id="cd18103">
    <property type="entry name" value="SpoU-like_RlmB"/>
    <property type="match status" value="1"/>
</dbReference>
<dbReference type="FunFam" id="3.40.1280.10:FF:000005">
    <property type="entry name" value="23S rRNA (guanosine-2'-O-)-methyltransferase RlmB"/>
    <property type="match status" value="1"/>
</dbReference>
<dbReference type="FunFam" id="3.30.1330.30:FF:000007">
    <property type="entry name" value="23S rRNA methyltransferase"/>
    <property type="match status" value="1"/>
</dbReference>
<dbReference type="Gene3D" id="3.30.1330.30">
    <property type="match status" value="1"/>
</dbReference>
<dbReference type="Gene3D" id="3.40.1280.10">
    <property type="match status" value="1"/>
</dbReference>
<dbReference type="HAMAP" id="MF_01887">
    <property type="entry name" value="23SrRNA_methyltr_B"/>
    <property type="match status" value="1"/>
</dbReference>
<dbReference type="InterPro" id="IPR024915">
    <property type="entry name" value="23S_rRNA_MeTrfase_RlmB"/>
</dbReference>
<dbReference type="InterPro" id="IPR029028">
    <property type="entry name" value="Alpha/beta_knot_MTases"/>
</dbReference>
<dbReference type="InterPro" id="IPR029064">
    <property type="entry name" value="Ribosomal_eL30-like_sf"/>
</dbReference>
<dbReference type="InterPro" id="IPR004441">
    <property type="entry name" value="rRNA_MeTrfase_TrmH"/>
</dbReference>
<dbReference type="InterPro" id="IPR001537">
    <property type="entry name" value="SpoU_MeTrfase"/>
</dbReference>
<dbReference type="InterPro" id="IPR013123">
    <property type="entry name" value="SpoU_subst-bd"/>
</dbReference>
<dbReference type="InterPro" id="IPR029026">
    <property type="entry name" value="tRNA_m1G_MTases_N"/>
</dbReference>
<dbReference type="NCBIfam" id="NF008386">
    <property type="entry name" value="PRK11181.1"/>
    <property type="match status" value="1"/>
</dbReference>
<dbReference type="NCBIfam" id="TIGR00186">
    <property type="entry name" value="rRNA_methyl_3"/>
    <property type="match status" value="1"/>
</dbReference>
<dbReference type="PANTHER" id="PTHR46429">
    <property type="entry name" value="23S RRNA (GUANOSINE-2'-O-)-METHYLTRANSFERASE RLMB"/>
    <property type="match status" value="1"/>
</dbReference>
<dbReference type="PANTHER" id="PTHR46429:SF1">
    <property type="entry name" value="23S RRNA (GUANOSINE-2'-O-)-METHYLTRANSFERASE RLMB"/>
    <property type="match status" value="1"/>
</dbReference>
<dbReference type="Pfam" id="PF00588">
    <property type="entry name" value="SpoU_methylase"/>
    <property type="match status" value="1"/>
</dbReference>
<dbReference type="Pfam" id="PF08032">
    <property type="entry name" value="SpoU_sub_bind"/>
    <property type="match status" value="1"/>
</dbReference>
<dbReference type="SMART" id="SM00967">
    <property type="entry name" value="SpoU_sub_bind"/>
    <property type="match status" value="1"/>
</dbReference>
<dbReference type="SUPFAM" id="SSF75217">
    <property type="entry name" value="alpha/beta knot"/>
    <property type="match status" value="1"/>
</dbReference>
<dbReference type="SUPFAM" id="SSF55315">
    <property type="entry name" value="L30e-like"/>
    <property type="match status" value="1"/>
</dbReference>
<feature type="chain" id="PRO_0000159804" description="23S rRNA (guanosine-2'-O-)-methyltransferase RlmB">
    <location>
        <begin position="1"/>
        <end position="243"/>
    </location>
</feature>
<feature type="binding site" evidence="1">
    <location>
        <position position="196"/>
    </location>
    <ligand>
        <name>S-adenosyl-L-methionine</name>
        <dbReference type="ChEBI" id="CHEBI:59789"/>
    </ligand>
</feature>
<feature type="binding site" evidence="1">
    <location>
        <position position="216"/>
    </location>
    <ligand>
        <name>S-adenosyl-L-methionine</name>
        <dbReference type="ChEBI" id="CHEBI:59789"/>
    </ligand>
</feature>
<feature type="binding site" evidence="1">
    <location>
        <position position="225"/>
    </location>
    <ligand>
        <name>S-adenosyl-L-methionine</name>
        <dbReference type="ChEBI" id="CHEBI:59789"/>
    </ligand>
</feature>
<evidence type="ECO:0000255" key="1">
    <source>
        <dbReference type="HAMAP-Rule" id="MF_01887"/>
    </source>
</evidence>
<name>RLMB_SHIFL</name>
<protein>
    <recommendedName>
        <fullName evidence="1">23S rRNA (guanosine-2'-O-)-methyltransferase RlmB</fullName>
        <ecNumber evidence="1">2.1.1.185</ecNumber>
    </recommendedName>
    <alternativeName>
        <fullName evidence="1">23S rRNA (guanosine2251 2'-O)-methyltransferase</fullName>
    </alternativeName>
    <alternativeName>
        <fullName evidence="1">23S rRNA Gm2251 2'-O-methyltransferase</fullName>
    </alternativeName>
</protein>
<sequence>MSEMIYGIHAVQALLERAPERFQEVFILKGREDKRLLPLIHALESQGVVIQLANRQYLDEKSDGAVHQGIIARVKPGRQYQENDLPDLIASLDQPFLLILDGVTDPHNLGACLRSADAAGVHAVIVPKDRSAQLNATAKKVACGAAESVPLIRVTNLARTMRMLQEENIWIVGTAGEADHTLYQSKMTGRLALVMGAEGEGMRRLTREHCDELISIPMAGSVSSLNVSVATGICLFEAVRQRS</sequence>
<keyword id="KW-0963">Cytoplasm</keyword>
<keyword id="KW-0489">Methyltransferase</keyword>
<keyword id="KW-1185">Reference proteome</keyword>
<keyword id="KW-0698">rRNA processing</keyword>
<keyword id="KW-0949">S-adenosyl-L-methionine</keyword>
<keyword id="KW-0808">Transferase</keyword>
<proteinExistence type="inferred from homology"/>
<gene>
    <name evidence="1" type="primary">rlmB</name>
    <name type="ordered locus">SF4335</name>
    <name type="ordered locus">S4603</name>
</gene>
<reference key="1">
    <citation type="journal article" date="2002" name="Nucleic Acids Res.">
        <title>Genome sequence of Shigella flexneri 2a: insights into pathogenicity through comparison with genomes of Escherichia coli K12 and O157.</title>
        <authorList>
            <person name="Jin Q."/>
            <person name="Yuan Z."/>
            <person name="Xu J."/>
            <person name="Wang Y."/>
            <person name="Shen Y."/>
            <person name="Lu W."/>
            <person name="Wang J."/>
            <person name="Liu H."/>
            <person name="Yang J."/>
            <person name="Yang F."/>
            <person name="Zhang X."/>
            <person name="Zhang J."/>
            <person name="Yang G."/>
            <person name="Wu H."/>
            <person name="Qu D."/>
            <person name="Dong J."/>
            <person name="Sun L."/>
            <person name="Xue Y."/>
            <person name="Zhao A."/>
            <person name="Gao Y."/>
            <person name="Zhu J."/>
            <person name="Kan B."/>
            <person name="Ding K."/>
            <person name="Chen S."/>
            <person name="Cheng H."/>
            <person name="Yao Z."/>
            <person name="He B."/>
            <person name="Chen R."/>
            <person name="Ma D."/>
            <person name="Qiang B."/>
            <person name="Wen Y."/>
            <person name="Hou Y."/>
            <person name="Yu J."/>
        </authorList>
    </citation>
    <scope>NUCLEOTIDE SEQUENCE [LARGE SCALE GENOMIC DNA]</scope>
    <source>
        <strain>301 / Serotype 2a</strain>
    </source>
</reference>
<reference key="2">
    <citation type="journal article" date="2003" name="Infect. Immun.">
        <title>Complete genome sequence and comparative genomics of Shigella flexneri serotype 2a strain 2457T.</title>
        <authorList>
            <person name="Wei J."/>
            <person name="Goldberg M.B."/>
            <person name="Burland V."/>
            <person name="Venkatesan M.M."/>
            <person name="Deng W."/>
            <person name="Fournier G."/>
            <person name="Mayhew G.F."/>
            <person name="Plunkett G. III"/>
            <person name="Rose D.J."/>
            <person name="Darling A."/>
            <person name="Mau B."/>
            <person name="Perna N.T."/>
            <person name="Payne S.M."/>
            <person name="Runyen-Janecky L.J."/>
            <person name="Zhou S."/>
            <person name="Schwartz D.C."/>
            <person name="Blattner F.R."/>
        </authorList>
    </citation>
    <scope>NUCLEOTIDE SEQUENCE [LARGE SCALE GENOMIC DNA]</scope>
    <source>
        <strain>ATCC 700930 / 2457T / Serotype 2a</strain>
    </source>
</reference>
<accession>P63180</accession>
<accession>P39290</accession>
<organism>
    <name type="scientific">Shigella flexneri</name>
    <dbReference type="NCBI Taxonomy" id="623"/>
    <lineage>
        <taxon>Bacteria</taxon>
        <taxon>Pseudomonadati</taxon>
        <taxon>Pseudomonadota</taxon>
        <taxon>Gammaproteobacteria</taxon>
        <taxon>Enterobacterales</taxon>
        <taxon>Enterobacteriaceae</taxon>
        <taxon>Shigella</taxon>
    </lineage>
</organism>